<organism>
    <name type="scientific">Streptococcus pneumoniae serotype 4 (strain ATCC BAA-334 / TIGR4)</name>
    <dbReference type="NCBI Taxonomy" id="170187"/>
    <lineage>
        <taxon>Bacteria</taxon>
        <taxon>Bacillati</taxon>
        <taxon>Bacillota</taxon>
        <taxon>Bacilli</taxon>
        <taxon>Lactobacillales</taxon>
        <taxon>Streptococcaceae</taxon>
        <taxon>Streptococcus</taxon>
    </lineage>
</organism>
<proteinExistence type="inferred from homology"/>
<keyword id="KW-1003">Cell membrane</keyword>
<keyword id="KW-0143">Chaperone</keyword>
<keyword id="KW-0449">Lipoprotein</keyword>
<keyword id="KW-0472">Membrane</keyword>
<keyword id="KW-0564">Palmitate</keyword>
<keyword id="KW-0653">Protein transport</keyword>
<keyword id="KW-1185">Reference proteome</keyword>
<keyword id="KW-0732">Signal</keyword>
<keyword id="KW-0812">Transmembrane</keyword>
<keyword id="KW-1133">Transmembrane helix</keyword>
<keyword id="KW-0813">Transport</keyword>
<sequence length="308" mass="34105">MKSIKRFALSAMGVAMLLVLTGCVNVDKTTGQPTGFIWNTIGAPMAEAIKYFATDKGLGFGVAIIIVTIIVRLIILPLGIYQSWKATLHSEKMNALKHVLEPHQTRLKEATTQEEKLEAQQALFAAQKEHGISMFGGVGCFPILLQMPFFSAIYFAAQHTEGVAQASYLGIPLGSPSMILVACAGVLYYLQSLLSLHGVEDEMQREQIKKMIYMSPLMIVVFSLFSPASVTLYWVVGGFMMILQQFIVNYIVRPKLRKKVREELAKNPPKASAFSKPSGRKDVTPEQPTAITSKKKHKNRNAGKQRSR</sequence>
<protein>
    <recommendedName>
        <fullName evidence="1">Membrane protein insertase YidC 1</fullName>
    </recommendedName>
    <alternativeName>
        <fullName evidence="1">Foldase YidC 1</fullName>
    </alternativeName>
    <alternativeName>
        <fullName evidence="1">Membrane integrase YidC 1</fullName>
    </alternativeName>
    <alternativeName>
        <fullName evidence="1">Membrane protein YidC 1</fullName>
    </alternativeName>
</protein>
<dbReference type="EMBL" id="AE005672">
    <property type="protein sequence ID" value="AAK76042.1"/>
    <property type="molecule type" value="Genomic_DNA"/>
</dbReference>
<dbReference type="PIR" id="A95231">
    <property type="entry name" value="A95231"/>
</dbReference>
<dbReference type="SMR" id="Q97NP5"/>
<dbReference type="PaxDb" id="170187-SP_1975"/>
<dbReference type="EnsemblBacteria" id="AAK76042">
    <property type="protein sequence ID" value="AAK76042"/>
    <property type="gene ID" value="SP_1975"/>
</dbReference>
<dbReference type="KEGG" id="spn:SP_1975"/>
<dbReference type="eggNOG" id="COG0706">
    <property type="taxonomic scope" value="Bacteria"/>
</dbReference>
<dbReference type="PhylomeDB" id="Q97NP5"/>
<dbReference type="BioCyc" id="SPNE170187:G1FZB-2030-MONOMER"/>
<dbReference type="Proteomes" id="UP000000585">
    <property type="component" value="Chromosome"/>
</dbReference>
<dbReference type="GO" id="GO:0005886">
    <property type="term" value="C:plasma membrane"/>
    <property type="evidence" value="ECO:0007669"/>
    <property type="project" value="UniProtKB-SubCell"/>
</dbReference>
<dbReference type="GO" id="GO:0032977">
    <property type="term" value="F:membrane insertase activity"/>
    <property type="evidence" value="ECO:0007669"/>
    <property type="project" value="InterPro"/>
</dbReference>
<dbReference type="GO" id="GO:0051205">
    <property type="term" value="P:protein insertion into membrane"/>
    <property type="evidence" value="ECO:0007669"/>
    <property type="project" value="TreeGrafter"/>
</dbReference>
<dbReference type="GO" id="GO:0015031">
    <property type="term" value="P:protein transport"/>
    <property type="evidence" value="ECO:0007669"/>
    <property type="project" value="UniProtKB-KW"/>
</dbReference>
<dbReference type="CDD" id="cd20070">
    <property type="entry name" value="5TM_YidC_Alb3"/>
    <property type="match status" value="1"/>
</dbReference>
<dbReference type="HAMAP" id="MF_01811">
    <property type="entry name" value="YidC_type2"/>
    <property type="match status" value="1"/>
</dbReference>
<dbReference type="InterPro" id="IPR001708">
    <property type="entry name" value="YidC/ALB3/OXA1/COX18"/>
</dbReference>
<dbReference type="InterPro" id="IPR028055">
    <property type="entry name" value="YidC/Oxa/ALB_C"/>
</dbReference>
<dbReference type="InterPro" id="IPR023060">
    <property type="entry name" value="YidC/YidC1/YidC2_Firmicutes"/>
</dbReference>
<dbReference type="InterPro" id="IPR047196">
    <property type="entry name" value="YidC_ALB_C"/>
</dbReference>
<dbReference type="NCBIfam" id="NF002687">
    <property type="entry name" value="PRK02463.1"/>
    <property type="match status" value="1"/>
</dbReference>
<dbReference type="NCBIfam" id="TIGR03592">
    <property type="entry name" value="yidC_oxa1_cterm"/>
    <property type="match status" value="1"/>
</dbReference>
<dbReference type="PANTHER" id="PTHR12428:SF65">
    <property type="entry name" value="CYTOCHROME C OXIDASE ASSEMBLY PROTEIN COX18, MITOCHONDRIAL"/>
    <property type="match status" value="1"/>
</dbReference>
<dbReference type="PANTHER" id="PTHR12428">
    <property type="entry name" value="OXA1"/>
    <property type="match status" value="1"/>
</dbReference>
<dbReference type="Pfam" id="PF02096">
    <property type="entry name" value="60KD_IMP"/>
    <property type="match status" value="1"/>
</dbReference>
<dbReference type="PROSITE" id="PS51257">
    <property type="entry name" value="PROKAR_LIPOPROTEIN"/>
    <property type="match status" value="1"/>
</dbReference>
<name>YIDC1_STRPN</name>
<feature type="signal peptide" evidence="1">
    <location>
        <begin position="1"/>
        <end position="22"/>
    </location>
</feature>
<feature type="chain" id="PRO_0000020407" description="Membrane protein insertase YidC 1">
    <location>
        <begin position="23"/>
        <end position="308"/>
    </location>
</feature>
<feature type="transmembrane region" description="Helical" evidence="1">
    <location>
        <begin position="60"/>
        <end position="80"/>
    </location>
</feature>
<feature type="transmembrane region" description="Helical" evidence="1">
    <location>
        <begin position="135"/>
        <end position="155"/>
    </location>
</feature>
<feature type="transmembrane region" description="Helical" evidence="1">
    <location>
        <begin position="168"/>
        <end position="188"/>
    </location>
</feature>
<feature type="transmembrane region" description="Helical" evidence="1">
    <location>
        <begin position="211"/>
        <end position="226"/>
    </location>
</feature>
<feature type="transmembrane region" description="Helical" evidence="1">
    <location>
        <begin position="232"/>
        <end position="252"/>
    </location>
</feature>
<feature type="region of interest" description="Disordered" evidence="2">
    <location>
        <begin position="263"/>
        <end position="308"/>
    </location>
</feature>
<feature type="compositionally biased region" description="Basic residues" evidence="2">
    <location>
        <begin position="293"/>
        <end position="308"/>
    </location>
</feature>
<feature type="lipid moiety-binding region" description="N-palmitoyl cysteine" evidence="1">
    <location>
        <position position="23"/>
    </location>
</feature>
<feature type="lipid moiety-binding region" description="S-diacylglycerol cysteine" evidence="1">
    <location>
        <position position="23"/>
    </location>
</feature>
<reference key="1">
    <citation type="journal article" date="2001" name="Science">
        <title>Complete genome sequence of a virulent isolate of Streptococcus pneumoniae.</title>
        <authorList>
            <person name="Tettelin H."/>
            <person name="Nelson K.E."/>
            <person name="Paulsen I.T."/>
            <person name="Eisen J.A."/>
            <person name="Read T.D."/>
            <person name="Peterson S.N."/>
            <person name="Heidelberg J.F."/>
            <person name="DeBoy R.T."/>
            <person name="Haft D.H."/>
            <person name="Dodson R.J."/>
            <person name="Durkin A.S."/>
            <person name="Gwinn M.L."/>
            <person name="Kolonay J.F."/>
            <person name="Nelson W.C."/>
            <person name="Peterson J.D."/>
            <person name="Umayam L.A."/>
            <person name="White O."/>
            <person name="Salzberg S.L."/>
            <person name="Lewis M.R."/>
            <person name="Radune D."/>
            <person name="Holtzapple E.K."/>
            <person name="Khouri H.M."/>
            <person name="Wolf A.M."/>
            <person name="Utterback T.R."/>
            <person name="Hansen C.L."/>
            <person name="McDonald L.A."/>
            <person name="Feldblyum T.V."/>
            <person name="Angiuoli S.V."/>
            <person name="Dickinson T."/>
            <person name="Hickey E.K."/>
            <person name="Holt I.E."/>
            <person name="Loftus B.J."/>
            <person name="Yang F."/>
            <person name="Smith H.O."/>
            <person name="Venter J.C."/>
            <person name="Dougherty B.A."/>
            <person name="Morrison D.A."/>
            <person name="Hollingshead S.K."/>
            <person name="Fraser C.M."/>
        </authorList>
    </citation>
    <scope>NUCLEOTIDE SEQUENCE [LARGE SCALE GENOMIC DNA]</scope>
    <source>
        <strain>ATCC BAA-334 / TIGR4</strain>
    </source>
</reference>
<accession>Q97NP5</accession>
<gene>
    <name evidence="1" type="primary">yidC1</name>
    <name type="ordered locus">SP_1975</name>
</gene>
<comment type="function">
    <text evidence="1">Required for the insertion and/or proper folding and/or complex formation of integral membrane proteins into the membrane. Involved in integration of membrane proteins that insert both dependently and independently of the Sec translocase complex, as well as at least some lipoproteins.</text>
</comment>
<comment type="subcellular location">
    <subcellularLocation>
        <location evidence="1">Cell membrane</location>
        <topology evidence="1">Multi-pass membrane protein</topology>
    </subcellularLocation>
</comment>
<comment type="similarity">
    <text evidence="1">Belongs to the OXA1/ALB3/YidC family. Type 2 subfamily.</text>
</comment>
<evidence type="ECO:0000255" key="1">
    <source>
        <dbReference type="HAMAP-Rule" id="MF_01811"/>
    </source>
</evidence>
<evidence type="ECO:0000256" key="2">
    <source>
        <dbReference type="SAM" id="MobiDB-lite"/>
    </source>
</evidence>